<accession>B0KUX1</accession>
<proteinExistence type="inferred from homology"/>
<gene>
    <name type="ordered locus">PputGB1_2909</name>
</gene>
<dbReference type="EMBL" id="CP000926">
    <property type="protein sequence ID" value="ABY98803.1"/>
    <property type="molecule type" value="Genomic_DNA"/>
</dbReference>
<dbReference type="RefSeq" id="WP_012272537.1">
    <property type="nucleotide sequence ID" value="NC_010322.1"/>
</dbReference>
<dbReference type="SMR" id="B0KUX1"/>
<dbReference type="KEGG" id="ppg:PputGB1_2909"/>
<dbReference type="eggNOG" id="COG0393">
    <property type="taxonomic scope" value="Bacteria"/>
</dbReference>
<dbReference type="HOGENOM" id="CLU_117144_3_2_6"/>
<dbReference type="Proteomes" id="UP000002157">
    <property type="component" value="Chromosome"/>
</dbReference>
<dbReference type="Gene3D" id="3.30.110.70">
    <property type="entry name" value="Hypothetical protein apc22750. Chain B"/>
    <property type="match status" value="1"/>
</dbReference>
<dbReference type="HAMAP" id="MF_00338">
    <property type="entry name" value="UPF0145"/>
    <property type="match status" value="1"/>
</dbReference>
<dbReference type="InterPro" id="IPR035439">
    <property type="entry name" value="UPF0145_dom_sf"/>
</dbReference>
<dbReference type="InterPro" id="IPR002765">
    <property type="entry name" value="UPF0145_YbjQ-like"/>
</dbReference>
<dbReference type="PANTHER" id="PTHR34068">
    <property type="entry name" value="UPF0145 PROTEIN YBJQ"/>
    <property type="match status" value="1"/>
</dbReference>
<dbReference type="PANTHER" id="PTHR34068:SF1">
    <property type="entry name" value="UPF0145 PROTEIN YBJQ"/>
    <property type="match status" value="1"/>
</dbReference>
<dbReference type="Pfam" id="PF01906">
    <property type="entry name" value="YbjQ_1"/>
    <property type="match status" value="1"/>
</dbReference>
<dbReference type="SUPFAM" id="SSF117782">
    <property type="entry name" value="YbjQ-like"/>
    <property type="match status" value="1"/>
</dbReference>
<feature type="chain" id="PRO_1000079304" description="UPF0145 protein PputGB1_2909">
    <location>
        <begin position="1"/>
        <end position="106"/>
    </location>
</feature>
<organism>
    <name type="scientific">Pseudomonas putida (strain GB-1)</name>
    <dbReference type="NCBI Taxonomy" id="76869"/>
    <lineage>
        <taxon>Bacteria</taxon>
        <taxon>Pseudomonadati</taxon>
        <taxon>Pseudomonadota</taxon>
        <taxon>Gammaproteobacteria</taxon>
        <taxon>Pseudomonadales</taxon>
        <taxon>Pseudomonadaceae</taxon>
        <taxon>Pseudomonas</taxon>
    </lineage>
</organism>
<evidence type="ECO:0000255" key="1">
    <source>
        <dbReference type="HAMAP-Rule" id="MF_00338"/>
    </source>
</evidence>
<name>Y2909_PSEPG</name>
<reference key="1">
    <citation type="submission" date="2008-01" db="EMBL/GenBank/DDBJ databases">
        <title>Complete sequence of Pseudomonas putida GB-1.</title>
        <authorList>
            <consortium name="US DOE Joint Genome Institute"/>
            <person name="Copeland A."/>
            <person name="Lucas S."/>
            <person name="Lapidus A."/>
            <person name="Barry K."/>
            <person name="Glavina del Rio T."/>
            <person name="Dalin E."/>
            <person name="Tice H."/>
            <person name="Pitluck S."/>
            <person name="Bruce D."/>
            <person name="Goodwin L."/>
            <person name="Chertkov O."/>
            <person name="Brettin T."/>
            <person name="Detter J.C."/>
            <person name="Han C."/>
            <person name="Kuske C.R."/>
            <person name="Schmutz J."/>
            <person name="Larimer F."/>
            <person name="Land M."/>
            <person name="Hauser L."/>
            <person name="Kyrpides N."/>
            <person name="Kim E."/>
            <person name="McCarthy J.K."/>
            <person name="Richardson P."/>
        </authorList>
    </citation>
    <scope>NUCLEOTIDE SEQUENCE [LARGE SCALE GENOMIC DNA]</scope>
    <source>
        <strain>GB-1</strain>
    </source>
</reference>
<comment type="similarity">
    <text evidence="1">Belongs to the UPF0145 family.</text>
</comment>
<protein>
    <recommendedName>
        <fullName evidence="1">UPF0145 protein PputGB1_2909</fullName>
    </recommendedName>
</protein>
<sequence>MIISTTSQLEGRPIAEYLGVVSSESVQGINFVRDFFTRFRDFFGGRSQTLESALREAREQATEELMARARQLQADAIVGVDFEISMPSVQGGMVVVFATGTAVRLK</sequence>